<organism>
    <name type="scientific">Rattus norvegicus</name>
    <name type="common">Rat</name>
    <dbReference type="NCBI Taxonomy" id="10116"/>
    <lineage>
        <taxon>Eukaryota</taxon>
        <taxon>Metazoa</taxon>
        <taxon>Chordata</taxon>
        <taxon>Craniata</taxon>
        <taxon>Vertebrata</taxon>
        <taxon>Euteleostomi</taxon>
        <taxon>Mammalia</taxon>
        <taxon>Eutheria</taxon>
        <taxon>Euarchontoglires</taxon>
        <taxon>Glires</taxon>
        <taxon>Rodentia</taxon>
        <taxon>Myomorpha</taxon>
        <taxon>Muroidea</taxon>
        <taxon>Muridae</taxon>
        <taxon>Murinae</taxon>
        <taxon>Rattus</taxon>
    </lineage>
</organism>
<sequence>MPVKKKRKAPGVAAAVAEDAGLKKCKISSYCRSQPPARLISGEEDFSRKKCLAWFYEYAGPDEVVGPEGMEKFCEDIGVEPENIIMLVLAWKLEAESMGFFTKEEWLKGMTSLQCDCTEKLQSRFDFLRSQLNDISSFKNIYRYAFDFARDKDQRSLDIDTAKSMLALLLGRTWPLFSVFYQYLEQSKYRVMNKDQWYNVLEFSRTVHADLSNYDEDGAWPVLLDEFVEWQKIRQTS</sequence>
<feature type="chain" id="PRO_0000254174" description="DCN1-like protein 5">
    <location>
        <begin position="1"/>
        <end position="237"/>
    </location>
</feature>
<feature type="domain" description="DCUN1" evidence="3">
    <location>
        <begin position="46"/>
        <end position="232"/>
    </location>
</feature>
<feature type="modified residue" description="Phosphoserine" evidence="1">
    <location>
        <position position="41"/>
    </location>
</feature>
<gene>
    <name evidence="5" type="primary">Dcun1d5</name>
</gene>
<accession>Q5PPL2</accession>
<reference key="1">
    <citation type="journal article" date="2004" name="Genome Res.">
        <title>The status, quality, and expansion of the NIH full-length cDNA project: the Mammalian Gene Collection (MGC).</title>
        <authorList>
            <consortium name="The MGC Project Team"/>
        </authorList>
    </citation>
    <scope>NUCLEOTIDE SEQUENCE [LARGE SCALE MRNA]</scope>
    <source>
        <tissue>Brain</tissue>
    </source>
</reference>
<protein>
    <recommendedName>
        <fullName evidence="4">DCN1-like protein 5</fullName>
    </recommendedName>
    <alternativeName>
        <fullName>DCUN1 domain-containing protein 5</fullName>
    </alternativeName>
    <alternativeName>
        <fullName>Defective in cullin neddylation protein 1-like protein 5</fullName>
    </alternativeName>
    <alternativeName>
        <fullName evidence="1">Squamous cell carcinoma-related oncogene 5</fullName>
    </alternativeName>
</protein>
<dbReference type="EMBL" id="BC087627">
    <property type="protein sequence ID" value="AAH87627.1"/>
    <property type="molecule type" value="mRNA"/>
</dbReference>
<dbReference type="RefSeq" id="NP_001009696.1">
    <property type="nucleotide sequence ID" value="NM_001009696.1"/>
</dbReference>
<dbReference type="SMR" id="Q5PPL2"/>
<dbReference type="FunCoup" id="Q5PPL2">
    <property type="interactions" value="2541"/>
</dbReference>
<dbReference type="STRING" id="10116.ENSRNOP00000058633"/>
<dbReference type="PhosphoSitePlus" id="Q5PPL2"/>
<dbReference type="jPOST" id="Q5PPL2"/>
<dbReference type="PaxDb" id="10116-ENSRNOP00000058633"/>
<dbReference type="GeneID" id="315405"/>
<dbReference type="KEGG" id="rno:315405"/>
<dbReference type="UCSC" id="RGD:1307008">
    <property type="organism name" value="rat"/>
</dbReference>
<dbReference type="AGR" id="RGD:1307008"/>
<dbReference type="CTD" id="84259"/>
<dbReference type="RGD" id="1307008">
    <property type="gene designation" value="Dcun1d5"/>
</dbReference>
<dbReference type="VEuPathDB" id="HostDB:ENSRNOG00000008390"/>
<dbReference type="eggNOG" id="KOG3077">
    <property type="taxonomic scope" value="Eukaryota"/>
</dbReference>
<dbReference type="HOGENOM" id="CLU_047042_3_1_1"/>
<dbReference type="InParanoid" id="Q5PPL2"/>
<dbReference type="OrthoDB" id="11828at9989"/>
<dbReference type="PhylomeDB" id="Q5PPL2"/>
<dbReference type="TreeFam" id="TF354270"/>
<dbReference type="Reactome" id="R-RNO-8951664">
    <property type="pathway name" value="Neddylation"/>
</dbReference>
<dbReference type="PRO" id="PR:Q5PPL2"/>
<dbReference type="Proteomes" id="UP000002494">
    <property type="component" value="Chromosome 8"/>
</dbReference>
<dbReference type="Bgee" id="ENSRNOG00000008390">
    <property type="expression patterns" value="Expressed in thymus and 20 other cell types or tissues"/>
</dbReference>
<dbReference type="GO" id="GO:0005737">
    <property type="term" value="C:cytoplasm"/>
    <property type="evidence" value="ECO:0007669"/>
    <property type="project" value="UniProtKB-KW"/>
</dbReference>
<dbReference type="GO" id="GO:0005634">
    <property type="term" value="C:nucleus"/>
    <property type="evidence" value="ECO:0000314"/>
    <property type="project" value="UniProtKB"/>
</dbReference>
<dbReference type="GO" id="GO:0005819">
    <property type="term" value="C:spindle"/>
    <property type="evidence" value="ECO:0000250"/>
    <property type="project" value="UniProtKB"/>
</dbReference>
<dbReference type="GO" id="GO:0000151">
    <property type="term" value="C:ubiquitin ligase complex"/>
    <property type="evidence" value="ECO:0000318"/>
    <property type="project" value="GO_Central"/>
</dbReference>
<dbReference type="GO" id="GO:0097602">
    <property type="term" value="F:cullin family protein binding"/>
    <property type="evidence" value="ECO:0000250"/>
    <property type="project" value="UniProtKB"/>
</dbReference>
<dbReference type="GO" id="GO:0031624">
    <property type="term" value="F:ubiquitin conjugating enzyme binding"/>
    <property type="evidence" value="ECO:0000318"/>
    <property type="project" value="GO_Central"/>
</dbReference>
<dbReference type="GO" id="GO:0032182">
    <property type="term" value="F:ubiquitin-like protein binding"/>
    <property type="evidence" value="ECO:0000318"/>
    <property type="project" value="GO_Central"/>
</dbReference>
<dbReference type="GO" id="GO:0006974">
    <property type="term" value="P:DNA damage response"/>
    <property type="evidence" value="ECO:0000250"/>
    <property type="project" value="UniProtKB"/>
</dbReference>
<dbReference type="GO" id="GO:2000436">
    <property type="term" value="P:positive regulation of protein neddylation"/>
    <property type="evidence" value="ECO:0000250"/>
    <property type="project" value="UniProtKB"/>
</dbReference>
<dbReference type="GO" id="GO:0045116">
    <property type="term" value="P:protein neddylation"/>
    <property type="evidence" value="ECO:0000318"/>
    <property type="project" value="GO_Central"/>
</dbReference>
<dbReference type="GO" id="GO:0001558">
    <property type="term" value="P:regulation of cell growth"/>
    <property type="evidence" value="ECO:0000250"/>
    <property type="project" value="UniProtKB"/>
</dbReference>
<dbReference type="GO" id="GO:2000434">
    <property type="term" value="P:regulation of protein neddylation"/>
    <property type="evidence" value="ECO:0000250"/>
    <property type="project" value="UniProtKB"/>
</dbReference>
<dbReference type="FunFam" id="1.10.238.10:FF:000041">
    <property type="entry name" value="DCN1-like protein"/>
    <property type="match status" value="1"/>
</dbReference>
<dbReference type="FunFam" id="1.10.238.200:FF:000002">
    <property type="entry name" value="DCN1-like protein"/>
    <property type="match status" value="1"/>
</dbReference>
<dbReference type="Gene3D" id="1.10.238.200">
    <property type="entry name" value="Cullin, PONY binding domain"/>
    <property type="match status" value="1"/>
</dbReference>
<dbReference type="Gene3D" id="1.10.238.10">
    <property type="entry name" value="EF-hand"/>
    <property type="match status" value="1"/>
</dbReference>
<dbReference type="InterPro" id="IPR014764">
    <property type="entry name" value="DCN-prot"/>
</dbReference>
<dbReference type="InterPro" id="IPR042460">
    <property type="entry name" value="DCN1-like_PONY"/>
</dbReference>
<dbReference type="InterPro" id="IPR005176">
    <property type="entry name" value="PONY_dom"/>
</dbReference>
<dbReference type="PANTHER" id="PTHR12281:SF6">
    <property type="entry name" value="DCN1-LIKE PROTEIN 5"/>
    <property type="match status" value="1"/>
</dbReference>
<dbReference type="PANTHER" id="PTHR12281">
    <property type="entry name" value="RP42 RELATED"/>
    <property type="match status" value="1"/>
</dbReference>
<dbReference type="Pfam" id="PF03556">
    <property type="entry name" value="Cullin_binding"/>
    <property type="match status" value="1"/>
</dbReference>
<dbReference type="PROSITE" id="PS51229">
    <property type="entry name" value="DCUN1"/>
    <property type="match status" value="1"/>
</dbReference>
<comment type="function">
    <text evidence="1">Contributes to the neddylation of all cullins by transferring NEDD8 from N-terminally acetylated NEDD8-conjugating E2s enzyme to different cullin C-terminal domain-RBX complexes which is necessary for the activation of cullin-RING E3 ubiquitin ligases (CRLs). May play a role in DNA damage response and may participate in cell proliferation and anchorage-independent cell growth.</text>
</comment>
<comment type="subunit">
    <text evidence="1">Part of a complex that contains DCUN1D5, CUL1 and RBX1; this interaction is bridged by CUL1. Interacts (via the DCUN1 domain) with the unneddylated cullins: interacts with CUL1, CUL2, CUL3, CUL4A, CUL4B and CUL5; these interactions promote the cullin neddylation and the identity of the cullin dictates the affinity of the interaction. Interacts (via DCUN1 domain) with UBE2M (N-terminally acetylated form) and probably with UBE2F (N-terminally acetylated form). May also interact with regulators or subunits of cullin-RING ligases such as RBX1, RNF7, ELOB and DDB1; these interactions are bridged by cullins. Interacts with CAND1; this interaction is bridged by cullins and strongly inhibits the neddylation of cullins. These CAND-cullin-DCNL complexes can only be neddylated in the presence of a substrate adapter.</text>
</comment>
<comment type="subcellular location">
    <subcellularLocation>
        <location evidence="1">Nucleus</location>
    </subcellularLocation>
    <subcellularLocation>
        <location evidence="1">Cytoplasm</location>
        <location evidence="1">Cytoskeleton</location>
        <location evidence="1">Spindle</location>
    </subcellularLocation>
    <text evidence="1">Subcellular localization is independent of the interaction with cullins.</text>
</comment>
<comment type="domain">
    <text evidence="1">The DCUN1 domain, also known as PONY domain, mediates the interaction with different cullins. The DCUN1 domain mediates the interaction with the N-terminally acetylated NEDD8-conjugating E2s enzyme leading to the NEDD8 transfer from N-terminally acetylated NEDD8-conjugating E2s enzyme to different cullin C-terminal domain-RBX complexes; the neddylation efficiency correlates with the DCUN1D5-cullin and DCUN1D5-E2 interaction affinities.</text>
</comment>
<comment type="PTM">
    <text evidence="1 2">Phosphorylation at Ser-41 is independent of cullin's interaction. Phosphorylated in response to both TICAM1 and MYD88 dependent Toll-like receptor (TLR) pathway activation (By similarity). Phosphorylated in response to IL1B stimulation (By similarity).</text>
</comment>
<name>DCNL5_RAT</name>
<keyword id="KW-0963">Cytoplasm</keyword>
<keyword id="KW-0206">Cytoskeleton</keyword>
<keyword id="KW-0539">Nucleus</keyword>
<keyword id="KW-0597">Phosphoprotein</keyword>
<keyword id="KW-1185">Reference proteome</keyword>
<proteinExistence type="evidence at transcript level"/>
<evidence type="ECO:0000250" key="1">
    <source>
        <dbReference type="UniProtKB" id="Q9BTE7"/>
    </source>
</evidence>
<evidence type="ECO:0000250" key="2">
    <source>
        <dbReference type="UniProtKB" id="Q9CXV9"/>
    </source>
</evidence>
<evidence type="ECO:0000255" key="3">
    <source>
        <dbReference type="PROSITE-ProRule" id="PRU00574"/>
    </source>
</evidence>
<evidence type="ECO:0000305" key="4"/>
<evidence type="ECO:0000312" key="5">
    <source>
        <dbReference type="RGD" id="1307008"/>
    </source>
</evidence>